<accession>Q10060</accession>
<sequence>MWSKLSISSKINRIRDPESDNTIEDTHVARVMRKYYMDKIGTLPEWLRPPGWQPPVNTGPTSPVSINASNAAPSNLKASYIPANPRRLSSSTSSASSPPLRRLPSVQHSTFDDLFEGVGSLQKSPSTTKPLSSTPSGSLLRSKFDHTRKKF</sequence>
<name>YAM5_SCHPO</name>
<gene>
    <name type="ORF">SPAC1F5.05c</name>
</gene>
<reference key="1">
    <citation type="journal article" date="2002" name="Nature">
        <title>The genome sequence of Schizosaccharomyces pombe.</title>
        <authorList>
            <person name="Wood V."/>
            <person name="Gwilliam R."/>
            <person name="Rajandream M.A."/>
            <person name="Lyne M.H."/>
            <person name="Lyne R."/>
            <person name="Stewart A."/>
            <person name="Sgouros J.G."/>
            <person name="Peat N."/>
            <person name="Hayles J."/>
            <person name="Baker S.G."/>
            <person name="Basham D."/>
            <person name="Bowman S."/>
            <person name="Brooks K."/>
            <person name="Brown D."/>
            <person name="Brown S."/>
            <person name="Chillingworth T."/>
            <person name="Churcher C.M."/>
            <person name="Collins M."/>
            <person name="Connor R."/>
            <person name="Cronin A."/>
            <person name="Davis P."/>
            <person name="Feltwell T."/>
            <person name="Fraser A."/>
            <person name="Gentles S."/>
            <person name="Goble A."/>
            <person name="Hamlin N."/>
            <person name="Harris D.E."/>
            <person name="Hidalgo J."/>
            <person name="Hodgson G."/>
            <person name="Holroyd S."/>
            <person name="Hornsby T."/>
            <person name="Howarth S."/>
            <person name="Huckle E.J."/>
            <person name="Hunt S."/>
            <person name="Jagels K."/>
            <person name="James K.D."/>
            <person name="Jones L."/>
            <person name="Jones M."/>
            <person name="Leather S."/>
            <person name="McDonald S."/>
            <person name="McLean J."/>
            <person name="Mooney P."/>
            <person name="Moule S."/>
            <person name="Mungall K.L."/>
            <person name="Murphy L.D."/>
            <person name="Niblett D."/>
            <person name="Odell C."/>
            <person name="Oliver K."/>
            <person name="O'Neil S."/>
            <person name="Pearson D."/>
            <person name="Quail M.A."/>
            <person name="Rabbinowitsch E."/>
            <person name="Rutherford K.M."/>
            <person name="Rutter S."/>
            <person name="Saunders D."/>
            <person name="Seeger K."/>
            <person name="Sharp S."/>
            <person name="Skelton J."/>
            <person name="Simmonds M.N."/>
            <person name="Squares R."/>
            <person name="Squares S."/>
            <person name="Stevens K."/>
            <person name="Taylor K."/>
            <person name="Taylor R.G."/>
            <person name="Tivey A."/>
            <person name="Walsh S.V."/>
            <person name="Warren T."/>
            <person name="Whitehead S."/>
            <person name="Woodward J.R."/>
            <person name="Volckaert G."/>
            <person name="Aert R."/>
            <person name="Robben J."/>
            <person name="Grymonprez B."/>
            <person name="Weltjens I."/>
            <person name="Vanstreels E."/>
            <person name="Rieger M."/>
            <person name="Schaefer M."/>
            <person name="Mueller-Auer S."/>
            <person name="Gabel C."/>
            <person name="Fuchs M."/>
            <person name="Duesterhoeft A."/>
            <person name="Fritzc C."/>
            <person name="Holzer E."/>
            <person name="Moestl D."/>
            <person name="Hilbert H."/>
            <person name="Borzym K."/>
            <person name="Langer I."/>
            <person name="Beck A."/>
            <person name="Lehrach H."/>
            <person name="Reinhardt R."/>
            <person name="Pohl T.M."/>
            <person name="Eger P."/>
            <person name="Zimmermann W."/>
            <person name="Wedler H."/>
            <person name="Wambutt R."/>
            <person name="Purnelle B."/>
            <person name="Goffeau A."/>
            <person name="Cadieu E."/>
            <person name="Dreano S."/>
            <person name="Gloux S."/>
            <person name="Lelaure V."/>
            <person name="Mottier S."/>
            <person name="Galibert F."/>
            <person name="Aves S.J."/>
            <person name="Xiang Z."/>
            <person name="Hunt C."/>
            <person name="Moore K."/>
            <person name="Hurst S.M."/>
            <person name="Lucas M."/>
            <person name="Rochet M."/>
            <person name="Gaillardin C."/>
            <person name="Tallada V.A."/>
            <person name="Garzon A."/>
            <person name="Thode G."/>
            <person name="Daga R.R."/>
            <person name="Cruzado L."/>
            <person name="Jimenez J."/>
            <person name="Sanchez M."/>
            <person name="del Rey F."/>
            <person name="Benito J."/>
            <person name="Dominguez A."/>
            <person name="Revuelta J.L."/>
            <person name="Moreno S."/>
            <person name="Armstrong J."/>
            <person name="Forsburg S.L."/>
            <person name="Cerutti L."/>
            <person name="Lowe T."/>
            <person name="McCombie W.R."/>
            <person name="Paulsen I."/>
            <person name="Potashkin J."/>
            <person name="Shpakovski G.V."/>
            <person name="Ussery D."/>
            <person name="Barrell B.G."/>
            <person name="Nurse P."/>
        </authorList>
    </citation>
    <scope>NUCLEOTIDE SEQUENCE [LARGE SCALE GENOMIC DNA]</scope>
    <source>
        <strain>972 / ATCC 24843</strain>
    </source>
</reference>
<feature type="chain" id="PRO_0000116444" description="Uncharacterized protein C1F5.05c">
    <location>
        <begin position="1"/>
        <end position="151"/>
    </location>
</feature>
<feature type="region of interest" description="Disordered" evidence="1">
    <location>
        <begin position="48"/>
        <end position="151"/>
    </location>
</feature>
<feature type="compositionally biased region" description="Polar residues" evidence="1">
    <location>
        <begin position="55"/>
        <end position="77"/>
    </location>
</feature>
<feature type="compositionally biased region" description="Low complexity" evidence="1">
    <location>
        <begin position="85"/>
        <end position="105"/>
    </location>
</feature>
<feature type="compositionally biased region" description="Low complexity" evidence="1">
    <location>
        <begin position="123"/>
        <end position="141"/>
    </location>
</feature>
<evidence type="ECO:0000256" key="1">
    <source>
        <dbReference type="SAM" id="MobiDB-lite"/>
    </source>
</evidence>
<protein>
    <recommendedName>
        <fullName>Uncharacterized protein C1F5.05c</fullName>
    </recommendedName>
</protein>
<organism>
    <name type="scientific">Schizosaccharomyces pombe (strain 972 / ATCC 24843)</name>
    <name type="common">Fission yeast</name>
    <dbReference type="NCBI Taxonomy" id="284812"/>
    <lineage>
        <taxon>Eukaryota</taxon>
        <taxon>Fungi</taxon>
        <taxon>Dikarya</taxon>
        <taxon>Ascomycota</taxon>
        <taxon>Taphrinomycotina</taxon>
        <taxon>Schizosaccharomycetes</taxon>
        <taxon>Schizosaccharomycetales</taxon>
        <taxon>Schizosaccharomycetaceae</taxon>
        <taxon>Schizosaccharomyces</taxon>
    </lineage>
</organism>
<keyword id="KW-1185">Reference proteome</keyword>
<proteinExistence type="predicted"/>
<dbReference type="EMBL" id="CU329670">
    <property type="protein sequence ID" value="CAA92233.1"/>
    <property type="molecule type" value="Genomic_DNA"/>
</dbReference>
<dbReference type="PIR" id="T38090">
    <property type="entry name" value="T38090"/>
</dbReference>
<dbReference type="SMR" id="Q10060"/>
<dbReference type="BioGRID" id="277937">
    <property type="interactions" value="68"/>
</dbReference>
<dbReference type="STRING" id="284812.Q10060"/>
<dbReference type="iPTMnet" id="Q10060"/>
<dbReference type="PaxDb" id="4896-SPAC1F5.05c.1"/>
<dbReference type="EnsemblFungi" id="SPAC1F5.05c.1">
    <property type="protein sequence ID" value="SPAC1F5.05c.1:pep"/>
    <property type="gene ID" value="SPAC1F5.05c"/>
</dbReference>
<dbReference type="KEGG" id="spo:2541432"/>
<dbReference type="PomBase" id="SPAC1F5.05c"/>
<dbReference type="VEuPathDB" id="FungiDB:SPAC1F5.05c"/>
<dbReference type="HOGENOM" id="CLU_1705288_0_0_1"/>
<dbReference type="InParanoid" id="Q10060"/>
<dbReference type="OMA" id="WLRPPGW"/>
<dbReference type="PRO" id="PR:Q10060"/>
<dbReference type="Proteomes" id="UP000002485">
    <property type="component" value="Chromosome I"/>
</dbReference>
<dbReference type="GO" id="GO:0032153">
    <property type="term" value="C:cell division site"/>
    <property type="evidence" value="ECO:0007005"/>
    <property type="project" value="PomBase"/>
</dbReference>
<dbReference type="GO" id="GO:0051286">
    <property type="term" value="C:cell tip"/>
    <property type="evidence" value="ECO:0007005"/>
    <property type="project" value="PomBase"/>
</dbReference>
<dbReference type="GO" id="GO:0005829">
    <property type="term" value="C:cytosol"/>
    <property type="evidence" value="ECO:0007005"/>
    <property type="project" value="PomBase"/>
</dbReference>
<dbReference type="GO" id="GO:0005634">
    <property type="term" value="C:nucleus"/>
    <property type="evidence" value="ECO:0007005"/>
    <property type="project" value="PomBase"/>
</dbReference>
<dbReference type="GO" id="GO:0006904">
    <property type="term" value="P:vesicle docking involved in exocytosis"/>
    <property type="evidence" value="ECO:0000266"/>
    <property type="project" value="PomBase"/>
</dbReference>
<dbReference type="InterPro" id="IPR028095">
    <property type="entry name" value="Mso1_N_dom"/>
</dbReference>
<dbReference type="Pfam" id="PF14477">
    <property type="entry name" value="Mso1_C"/>
    <property type="match status" value="1"/>
</dbReference>
<dbReference type="Pfam" id="PF14475">
    <property type="entry name" value="Mso1_Sec1_bdg"/>
    <property type="match status" value="1"/>
</dbReference>